<comment type="function">
    <text evidence="1">Specific and highly efficient GDP-D-glucose phosphorylase regulating the levels of GDP-D-glucose in cells.</text>
</comment>
<comment type="catalytic activity">
    <reaction>
        <text>GDP-alpha-D-glucose + phosphate = alpha-D-glucose 1-phosphate + GDP + H(+)</text>
        <dbReference type="Rhea" id="RHEA:30387"/>
        <dbReference type="ChEBI" id="CHEBI:15378"/>
        <dbReference type="ChEBI" id="CHEBI:43474"/>
        <dbReference type="ChEBI" id="CHEBI:58189"/>
        <dbReference type="ChEBI" id="CHEBI:58601"/>
        <dbReference type="ChEBI" id="CHEBI:62230"/>
        <dbReference type="EC" id="2.7.7.78"/>
    </reaction>
</comment>
<comment type="subcellular location">
    <subcellularLocation>
        <location evidence="1">Cytoplasm</location>
    </subcellularLocation>
</comment>
<comment type="miscellaneous">
    <text>The orthologs in A.thaliana are GDP-L-galactose phosphorylases catalyzing the first reaction of the Smirnoff-Wheeler pathway, the major route to ascorbate biosynthesis in plants.</text>
</comment>
<comment type="similarity">
    <text evidence="2">Belongs to the GDPGP1 family.</text>
</comment>
<name>GDPP1_DANRE</name>
<organism>
    <name type="scientific">Danio rerio</name>
    <name type="common">Zebrafish</name>
    <name type="synonym">Brachydanio rerio</name>
    <dbReference type="NCBI Taxonomy" id="7955"/>
    <lineage>
        <taxon>Eukaryota</taxon>
        <taxon>Metazoa</taxon>
        <taxon>Chordata</taxon>
        <taxon>Craniata</taxon>
        <taxon>Vertebrata</taxon>
        <taxon>Euteleostomi</taxon>
        <taxon>Actinopterygii</taxon>
        <taxon>Neopterygii</taxon>
        <taxon>Teleostei</taxon>
        <taxon>Ostariophysi</taxon>
        <taxon>Cypriniformes</taxon>
        <taxon>Danionidae</taxon>
        <taxon>Danioninae</taxon>
        <taxon>Danio</taxon>
    </lineage>
</organism>
<keyword id="KW-0963">Cytoplasm</keyword>
<keyword id="KW-0344">Guanine-nucleotide releasing factor</keyword>
<keyword id="KW-0378">Hydrolase</keyword>
<keyword id="KW-0547">Nucleotide-binding</keyword>
<keyword id="KW-0548">Nucleotidyltransferase</keyword>
<keyword id="KW-1185">Reference proteome</keyword>
<keyword id="KW-0808">Transferase</keyword>
<accession>Q08CA1</accession>
<protein>
    <recommendedName>
        <fullName>GDP-D-glucose phosphorylase 1</fullName>
        <ecNumber>2.7.7.78</ecNumber>
    </recommendedName>
</protein>
<dbReference type="EC" id="2.7.7.78"/>
<dbReference type="EMBL" id="BC124322">
    <property type="protein sequence ID" value="AAI24323.1"/>
    <property type="molecule type" value="mRNA"/>
</dbReference>
<dbReference type="RefSeq" id="NP_001071021.1">
    <property type="nucleotide sequence ID" value="NM_001077553.1"/>
</dbReference>
<dbReference type="FunCoup" id="Q08CA1">
    <property type="interactions" value="376"/>
</dbReference>
<dbReference type="STRING" id="7955.ENSDARP00000128968"/>
<dbReference type="PaxDb" id="7955-ENSDARP00000128968"/>
<dbReference type="GeneID" id="560896"/>
<dbReference type="KEGG" id="dre:560896"/>
<dbReference type="AGR" id="ZFIN:ZDB-GENE-060929-280"/>
<dbReference type="CTD" id="390637"/>
<dbReference type="ZFIN" id="ZDB-GENE-060929-280">
    <property type="gene designation" value="gdpgp1"/>
</dbReference>
<dbReference type="eggNOG" id="KOG2720">
    <property type="taxonomic scope" value="Eukaryota"/>
</dbReference>
<dbReference type="InParanoid" id="Q08CA1"/>
<dbReference type="OrthoDB" id="417175at2759"/>
<dbReference type="PhylomeDB" id="Q08CA1"/>
<dbReference type="PRO" id="PR:Q08CA1"/>
<dbReference type="Proteomes" id="UP000000437">
    <property type="component" value="Chromosome 25"/>
</dbReference>
<dbReference type="GO" id="GO:0005737">
    <property type="term" value="C:cytoplasm"/>
    <property type="evidence" value="ECO:0000250"/>
    <property type="project" value="UniProtKB"/>
</dbReference>
<dbReference type="GO" id="GO:0080048">
    <property type="term" value="F:GDP-D-glucose phosphorylase activity"/>
    <property type="evidence" value="ECO:0000250"/>
    <property type="project" value="UniProtKB"/>
</dbReference>
<dbReference type="GO" id="GO:0005085">
    <property type="term" value="F:guanyl-nucleotide exchange factor activity"/>
    <property type="evidence" value="ECO:0007669"/>
    <property type="project" value="UniProtKB-KW"/>
</dbReference>
<dbReference type="GO" id="GO:0016787">
    <property type="term" value="F:hydrolase activity"/>
    <property type="evidence" value="ECO:0007669"/>
    <property type="project" value="UniProtKB-KW"/>
</dbReference>
<dbReference type="GO" id="GO:0000166">
    <property type="term" value="F:nucleotide binding"/>
    <property type="evidence" value="ECO:0007669"/>
    <property type="project" value="UniProtKB-KW"/>
</dbReference>
<dbReference type="GO" id="GO:0006006">
    <property type="term" value="P:glucose metabolic process"/>
    <property type="evidence" value="ECO:0000250"/>
    <property type="project" value="UniProtKB"/>
</dbReference>
<dbReference type="InterPro" id="IPR026506">
    <property type="entry name" value="GDPGP"/>
</dbReference>
<dbReference type="PANTHER" id="PTHR20884">
    <property type="entry name" value="GDP-D-GLUCOSE PHOSPHORYLASE 1"/>
    <property type="match status" value="1"/>
</dbReference>
<dbReference type="PANTHER" id="PTHR20884:SF8">
    <property type="entry name" value="GDP-D-GLUCOSE PHOSPHORYLASE 1"/>
    <property type="match status" value="1"/>
</dbReference>
<gene>
    <name type="primary">gdpgp1</name>
    <name type="ORF">zgc:153343</name>
</gene>
<sequence>MGDCSIFTYTDNDFIGKVCCSGQQNRGRSRFDIALRSGWTEKRNTGLFRYRLDELETRILPGSRGYIAQLNIMRGTERRKPQEILSVRQNFDPKQFNFNKINPKELLFELKRESERKCSVIINVSPLEFGHCLLVPEPEKCFPQVLTHLAVQTGIETVLLSADPGFRVGFNSLGGFASVNHLHLHGYYLNHRLKIESSPAKLVLPNLNLYELVDFPSGFLFYTQGPNLDLVVKAICSLTDVLVDHNIAHNLFLTRGCPPQMEPDTSSSRNGVRVIVWPRLSCFGAKEESAFNVALCELAGHLPFKNRQDYESATEETVQDIIQKYLLPQEETAQLKEHLMKCL</sequence>
<feature type="chain" id="PRO_0000336753" description="GDP-D-glucose phosphorylase 1">
    <location>
        <begin position="1"/>
        <end position="343"/>
    </location>
</feature>
<feature type="active site" description="Tele-GMP-histidine intermediate" evidence="1">
    <location>
        <position position="183"/>
    </location>
</feature>
<reference key="1">
    <citation type="submission" date="2006-09" db="EMBL/GenBank/DDBJ databases">
        <authorList>
            <consortium name="NIH - Zebrafish Gene Collection (ZGC) project"/>
        </authorList>
    </citation>
    <scope>NUCLEOTIDE SEQUENCE [LARGE SCALE MRNA]</scope>
    <source>
        <tissue>Ovary</tissue>
    </source>
</reference>
<proteinExistence type="evidence at transcript level"/>
<evidence type="ECO:0000250" key="1"/>
<evidence type="ECO:0000305" key="2"/>